<reference key="1">
    <citation type="journal article" date="2010" name="Nature">
        <title>Transfer of carbohydrate-active enzymes from marine bacteria to Japanese gut microbiota.</title>
        <authorList>
            <person name="Hehemann J.H."/>
            <person name="Correc G."/>
            <person name="Barbeyron T."/>
            <person name="Helbert W."/>
            <person name="Czjzek M."/>
            <person name="Michel G."/>
        </authorList>
    </citation>
    <scope>NUCLEOTIDE SEQUENCE [GENOMIC DNA]</scope>
    <source>
        <strain>DSM 12802 / CCUG 47099 / CIP 106680 / KCTC 12921 / NCIMB 13871 / Dsij</strain>
    </source>
</reference>
<reference key="2">
    <citation type="submission" date="2009-07" db="EMBL/GenBank/DDBJ databases">
        <title>Complete genome sequence of Zobellia galactanivorans Dsij.</title>
        <authorList>
            <consortium name="Genoscope - CEA"/>
        </authorList>
    </citation>
    <scope>NUCLEOTIDE SEQUENCE [LARGE SCALE GENOMIC DNA]</scope>
    <source>
        <strain>DSM 12802 / CCUG 47099 / CIP 106680 / KCTC 12921 / NCIMB 13871 / Dsij</strain>
    </source>
</reference>
<reference key="3">
    <citation type="journal article" date="2005" name="Biochem. J.">
        <title>The endo-beta-agarases AgaA and AgaB from the marine bacterium Zobellia galactanivorans: two paralogue enzymes with different molecular organizations and catalytic behaviours.</title>
        <authorList>
            <person name="Jam M."/>
            <person name="Flament D."/>
            <person name="Allouch J."/>
            <person name="Potin P."/>
            <person name="Thion L."/>
            <person name="Kloareg B."/>
            <person name="Czjzek M."/>
            <person name="Helbert W."/>
            <person name="Michel G."/>
            <person name="Barbeyron T."/>
        </authorList>
    </citation>
    <scope>PROTEIN SEQUENCE OF 68-77</scope>
    <scope>SUBCELLULAR LOCATION</scope>
    <source>
        <strain>DSM 12802 / CCUG 47099 / CIP 106680 / KCTC 12921 / NCIMB 13871 / Dsij</strain>
    </source>
</reference>
<reference key="4">
    <citation type="journal article" date="2012" name="J. Biol. Chem.">
        <title>Biochemical and structural characterization of the complex agarolytic enzyme system from the marine bacterium Zobellia galactanivorans.</title>
        <authorList>
            <person name="Hehemann J.H."/>
            <person name="Correc G."/>
            <person name="Thomas F."/>
            <person name="Bernard T."/>
            <person name="Barbeyron T."/>
            <person name="Jam M."/>
            <person name="Helbert W."/>
            <person name="Michel G."/>
            <person name="Czjzek M."/>
        </authorList>
    </citation>
    <scope>INDUCTION</scope>
    <source>
        <strain>DSM 12802 / CCUG 47099 / CIP 106680 / KCTC 12921 / NCIMB 13871 / Dsij</strain>
    </source>
</reference>
<accession>D7GXG5</accession>
<comment type="function">
    <text evidence="1">Cleaves the beta-1,4-linkages between beta-D-galactose and alpha-L-3,6-anhydro-galactose residues in agarose. Cleaves agarose in a random manner with retention of the anomeric-bond configuration, producing beta-anomers that give rise progressively to alpha-anomers when mutarotation takes place (By similarity).</text>
</comment>
<comment type="catalytic activity">
    <reaction>
        <text>Hydrolysis of (1-&gt;4)-beta-D-galactosidic linkages in agarose, giving the tetramer as the predominant product.</text>
        <dbReference type="EC" id="3.2.1.81"/>
    </reaction>
</comment>
<comment type="subcellular location">
    <subcellularLocation>
        <location evidence="7">Secreted</location>
    </subcellularLocation>
</comment>
<comment type="induction">
    <text evidence="8">When cells are grown with the low sulfated agar.</text>
</comment>
<comment type="similarity">
    <text evidence="9">Belongs to the glycosyl hydrolase 16 family.</text>
</comment>
<evidence type="ECO:0000250" key="1"/>
<evidence type="ECO:0000250" key="2">
    <source>
        <dbReference type="UniProtKB" id="D7GXG0"/>
    </source>
</evidence>
<evidence type="ECO:0000250" key="3">
    <source>
        <dbReference type="UniProtKB" id="G0L322"/>
    </source>
</evidence>
<evidence type="ECO:0000255" key="4"/>
<evidence type="ECO:0000255" key="5">
    <source>
        <dbReference type="PROSITE-ProRule" id="PRU01098"/>
    </source>
</evidence>
<evidence type="ECO:0000256" key="6">
    <source>
        <dbReference type="SAM" id="MobiDB-lite"/>
    </source>
</evidence>
<evidence type="ECO:0000269" key="7">
    <source>
    </source>
</evidence>
<evidence type="ECO:0000269" key="8">
    <source>
    </source>
</evidence>
<evidence type="ECO:0000305" key="9"/>
<evidence type="ECO:0007829" key="10">
    <source>
        <dbReference type="PDB" id="6HY3"/>
    </source>
</evidence>
<feature type="signal peptide" evidence="4">
    <location>
        <begin position="1"/>
        <end position="17"/>
    </location>
</feature>
<feature type="propeptide" id="PRO_0000422026" evidence="7">
    <location>
        <begin position="18"/>
        <end position="67"/>
    </location>
</feature>
<feature type="chain" id="PRO_0000422027" description="Beta-agarase C">
    <location>
        <begin position="68"/>
        <end position="328"/>
    </location>
</feature>
<feature type="domain" description="GH16" evidence="5">
    <location>
        <begin position="70"/>
        <end position="328"/>
    </location>
</feature>
<feature type="region of interest" description="Disordered" evidence="6">
    <location>
        <begin position="26"/>
        <end position="61"/>
    </location>
</feature>
<feature type="compositionally biased region" description="Basic and acidic residues" evidence="6">
    <location>
        <begin position="26"/>
        <end position="45"/>
    </location>
</feature>
<feature type="compositionally biased region" description="Acidic residues" evidence="6">
    <location>
        <begin position="46"/>
        <end position="59"/>
    </location>
</feature>
<feature type="active site" description="Nucleophile" evidence="3">
    <location>
        <position position="188"/>
    </location>
</feature>
<feature type="active site" description="Proton donor" evidence="3">
    <location>
        <position position="193"/>
    </location>
</feature>
<feature type="binding site" evidence="2">
    <location>
        <position position="110"/>
    </location>
    <ligand>
        <name>substrate</name>
    </ligand>
</feature>
<feature type="binding site" evidence="3">
    <location>
        <begin position="119"/>
        <end position="129"/>
    </location>
    <ligand>
        <name>substrate</name>
    </ligand>
</feature>
<feature type="binding site" evidence="3">
    <location>
        <begin position="133"/>
        <end position="135"/>
    </location>
    <ligand>
        <name>substrate</name>
    </ligand>
</feature>
<feature type="binding site" evidence="2">
    <location>
        <position position="188"/>
    </location>
    <ligand>
        <name>substrate</name>
    </ligand>
</feature>
<feature type="binding site" evidence="2">
    <location>
        <position position="193"/>
    </location>
    <ligand>
        <name>substrate</name>
    </ligand>
</feature>
<feature type="binding site" evidence="3">
    <location>
        <position position="224"/>
    </location>
    <ligand>
        <name>substrate</name>
    </ligand>
</feature>
<feature type="strand" evidence="10">
    <location>
        <begin position="84"/>
        <end position="88"/>
    </location>
</feature>
<feature type="helix" evidence="10">
    <location>
        <begin position="90"/>
        <end position="92"/>
    </location>
</feature>
<feature type="turn" evidence="10">
    <location>
        <begin position="102"/>
        <end position="104"/>
    </location>
</feature>
<feature type="strand" evidence="10">
    <location>
        <begin position="105"/>
        <end position="107"/>
    </location>
</feature>
<feature type="strand" evidence="10">
    <location>
        <begin position="116"/>
        <end position="118"/>
    </location>
</feature>
<feature type="helix" evidence="10">
    <location>
        <begin position="120"/>
        <end position="122"/>
    </location>
</feature>
<feature type="strand" evidence="10">
    <location>
        <begin position="123"/>
        <end position="126"/>
    </location>
</feature>
<feature type="strand" evidence="10">
    <location>
        <begin position="129"/>
        <end position="133"/>
    </location>
</feature>
<feature type="strand" evidence="10">
    <location>
        <begin position="144"/>
        <end position="146"/>
    </location>
</feature>
<feature type="strand" evidence="10">
    <location>
        <begin position="148"/>
        <end position="153"/>
    </location>
</feature>
<feature type="strand" evidence="10">
    <location>
        <begin position="157"/>
        <end position="166"/>
    </location>
</feature>
<feature type="strand" evidence="10">
    <location>
        <begin position="169"/>
        <end position="181"/>
    </location>
</feature>
<feature type="strand" evidence="10">
    <location>
        <begin position="183"/>
        <end position="194"/>
    </location>
</feature>
<feature type="strand" evidence="10">
    <location>
        <begin position="199"/>
        <end position="201"/>
    </location>
</feature>
<feature type="turn" evidence="10">
    <location>
        <begin position="204"/>
        <end position="208"/>
    </location>
</feature>
<feature type="strand" evidence="10">
    <location>
        <begin position="213"/>
        <end position="218"/>
    </location>
</feature>
<feature type="strand" evidence="10">
    <location>
        <begin position="221"/>
        <end position="226"/>
    </location>
</feature>
<feature type="helix" evidence="10">
    <location>
        <begin position="231"/>
        <end position="233"/>
    </location>
</feature>
<feature type="turn" evidence="10">
    <location>
        <begin position="239"/>
        <end position="242"/>
    </location>
</feature>
<feature type="turn" evidence="10">
    <location>
        <begin position="245"/>
        <end position="247"/>
    </location>
</feature>
<feature type="strand" evidence="10">
    <location>
        <begin position="250"/>
        <end position="256"/>
    </location>
</feature>
<feature type="strand" evidence="10">
    <location>
        <begin position="258"/>
        <end position="266"/>
    </location>
</feature>
<feature type="strand" evidence="10">
    <location>
        <begin position="269"/>
        <end position="275"/>
    </location>
</feature>
<feature type="strand" evidence="10">
    <location>
        <begin position="284"/>
        <end position="291"/>
    </location>
</feature>
<feature type="turn" evidence="10">
    <location>
        <begin position="296"/>
        <end position="299"/>
    </location>
</feature>
<feature type="helix" evidence="10">
    <location>
        <begin position="304"/>
        <end position="308"/>
    </location>
</feature>
<feature type="turn" evidence="10">
    <location>
        <begin position="310"/>
        <end position="312"/>
    </location>
</feature>
<feature type="strand" evidence="10">
    <location>
        <begin position="313"/>
        <end position="327"/>
    </location>
</feature>
<dbReference type="EC" id="3.2.1.81"/>
<dbReference type="EMBL" id="FQ073843">
    <property type="protein sequence ID" value="CBM41187.1"/>
    <property type="molecule type" value="Genomic_DNA"/>
</dbReference>
<dbReference type="EMBL" id="FP476056">
    <property type="protein sequence ID" value="CAZ98402.1"/>
    <property type="molecule type" value="Genomic_DNA"/>
</dbReference>
<dbReference type="RefSeq" id="WP_013995590.1">
    <property type="nucleotide sequence ID" value="NZ_JAUOSS010000005.1"/>
</dbReference>
<dbReference type="PDB" id="6HY3">
    <property type="method" value="X-ray"/>
    <property type="resolution" value="1.30 A"/>
    <property type="chains" value="A=69-328"/>
</dbReference>
<dbReference type="PDBsum" id="6HY3"/>
<dbReference type="SMR" id="D7GXG5"/>
<dbReference type="STRING" id="63186.ZOBELLIA_4267"/>
<dbReference type="CAZy" id="GH16">
    <property type="family name" value="Glycoside Hydrolase Family 16"/>
</dbReference>
<dbReference type="KEGG" id="zga:ZOBELLIA_4267"/>
<dbReference type="PATRIC" id="fig|63186.3.peg.4177"/>
<dbReference type="HOGENOM" id="CLU_053494_0_0_10"/>
<dbReference type="Proteomes" id="UP000008898">
    <property type="component" value="Chromosome"/>
</dbReference>
<dbReference type="GO" id="GO:0005576">
    <property type="term" value="C:extracellular region"/>
    <property type="evidence" value="ECO:0007669"/>
    <property type="project" value="UniProtKB-SubCell"/>
</dbReference>
<dbReference type="GO" id="GO:0033916">
    <property type="term" value="F:beta-agarase activity"/>
    <property type="evidence" value="ECO:0007669"/>
    <property type="project" value="UniProtKB-EC"/>
</dbReference>
<dbReference type="GO" id="GO:0005975">
    <property type="term" value="P:carbohydrate metabolic process"/>
    <property type="evidence" value="ECO:0007669"/>
    <property type="project" value="InterPro"/>
</dbReference>
<dbReference type="Gene3D" id="2.60.120.200">
    <property type="match status" value="1"/>
</dbReference>
<dbReference type="InterPro" id="IPR013320">
    <property type="entry name" value="ConA-like_dom_sf"/>
</dbReference>
<dbReference type="InterPro" id="IPR000757">
    <property type="entry name" value="GH16"/>
</dbReference>
<dbReference type="SUPFAM" id="SSF49899">
    <property type="entry name" value="Concanavalin A-like lectins/glucanases"/>
    <property type="match status" value="1"/>
</dbReference>
<dbReference type="PROSITE" id="PS51762">
    <property type="entry name" value="GH16_2"/>
    <property type="match status" value="1"/>
</dbReference>
<organism>
    <name type="scientific">Zobellia galactanivorans (strain DSM 12802 / CCUG 47099 / CIP 106680 / NCIMB 13871 / Dsij)</name>
    <dbReference type="NCBI Taxonomy" id="63186"/>
    <lineage>
        <taxon>Bacteria</taxon>
        <taxon>Pseudomonadati</taxon>
        <taxon>Bacteroidota</taxon>
        <taxon>Flavobacteriia</taxon>
        <taxon>Flavobacteriales</taxon>
        <taxon>Flavobacteriaceae</taxon>
        <taxon>Zobellia</taxon>
    </lineage>
</organism>
<protein>
    <recommendedName>
        <fullName>Beta-agarase C</fullName>
        <ecNumber>3.2.1.81</ecNumber>
    </recommendedName>
</protein>
<gene>
    <name type="primary">agaC</name>
    <name type="ordered locus">zobellia_4267</name>
</gene>
<sequence>MNLTKMAVFAASLFCLACKNDIDTELEKKSIPESEIQKSEEKLPNEEELTPTDPDEETNKEETVTANATYDFTGNTPPPAPQGMKWVKISQLSDEFNNGFNTDKWTKSLWNYGVPVQMKAENSGVSDGKLWIKATLGNDPERWFETSRVMSKAQVNYPMYTVSRIKGAHISAYNTFWLNNGNISNRNEIDVIENNSNPSCNCQPDFPWQMNSQYFHVVNDDTKRNKGNFDNRELSDANPLKGVAWNEEYHTFGVWWKDATHIQFYLDGEPAGSVVSARDFTRELNIIWDLWTVDADWLGGLAKKEHLSNNNINTMKIDWIHTYQLVEE</sequence>
<name>AGAC_ZOBGA</name>
<proteinExistence type="evidence at protein level"/>
<keyword id="KW-0002">3D-structure</keyword>
<keyword id="KW-0903">Direct protein sequencing</keyword>
<keyword id="KW-0326">Glycosidase</keyword>
<keyword id="KW-0378">Hydrolase</keyword>
<keyword id="KW-1185">Reference proteome</keyword>
<keyword id="KW-0964">Secreted</keyword>
<keyword id="KW-0732">Signal</keyword>